<accession>P0A6M8</accession>
<accession>P02996</accession>
<accession>Q2M705</accession>
<accession>Q9F439</accession>
<feature type="initiator methionine" description="Removed" evidence="3 5">
    <location>
        <position position="1"/>
    </location>
</feature>
<feature type="chain" id="PRO_0000091119" description="Elongation factor G">
    <location>
        <begin position="2"/>
        <end position="704"/>
    </location>
</feature>
<feature type="domain" description="tr-type G">
    <location>
        <begin position="8"/>
        <end position="290"/>
    </location>
</feature>
<feature type="binding site" evidence="1">
    <location>
        <begin position="17"/>
        <end position="24"/>
    </location>
    <ligand>
        <name>GTP</name>
        <dbReference type="ChEBI" id="CHEBI:37565"/>
    </ligand>
</feature>
<feature type="binding site" evidence="1">
    <location>
        <begin position="88"/>
        <end position="92"/>
    </location>
    <ligand>
        <name>GTP</name>
        <dbReference type="ChEBI" id="CHEBI:37565"/>
    </ligand>
</feature>
<feature type="binding site" evidence="1">
    <location>
        <begin position="142"/>
        <end position="145"/>
    </location>
    <ligand>
        <name>GTP</name>
        <dbReference type="ChEBI" id="CHEBI:37565"/>
    </ligand>
</feature>
<feature type="modified residue" description="N6-acetyllysine" evidence="2">
    <location>
        <position position="504"/>
    </location>
</feature>
<feature type="modified residue" description="N6-acetyllysine" evidence="2">
    <location>
        <position position="643"/>
    </location>
</feature>
<feature type="sequence conflict" description="In Ref. 5; AA sequence." evidence="6" ref="5">
    <original>NG</original>
    <variation>DC</variation>
    <location>
        <begin position="296"/>
        <end position="297"/>
    </location>
</feature>
<feature type="sequence conflict" description="In Ref. 5; AA sequence." evidence="6" ref="5">
    <location>
        <begin position="300"/>
        <end position="302"/>
    </location>
</feature>
<feature type="sequence conflict" description="In Ref. 5; AA sequence." evidence="6" ref="5">
    <original>T</original>
    <variation>C</variation>
    <location>
        <position position="396"/>
    </location>
</feature>
<feature type="sequence conflict" description="In Ref. 5; AA sequence and 9; AA sequence." evidence="6" ref="5 9">
    <original>I</original>
    <variation>V</variation>
    <location>
        <position position="576"/>
    </location>
</feature>
<feature type="sequence conflict" description="In Ref. 5; AA sequence and 9; AA sequence." evidence="6" ref="5 9">
    <original>H</original>
    <variation>K</variation>
    <location>
        <position position="584"/>
    </location>
</feature>
<feature type="sequence conflict" description="In Ref. 5; AA sequence and 9; AA sequence." evidence="6" ref="5 9">
    <original>K</original>
    <variation>H</variation>
    <location>
        <position position="594"/>
    </location>
</feature>
<feature type="sequence conflict" description="In Ref. 5; AA sequence and 9; AA sequence." evidence="6" ref="5 9">
    <original>E</original>
    <variation>Q</variation>
    <location>
        <position position="626"/>
    </location>
</feature>
<feature type="sequence conflict" description="In Ref. 5; AA sequence and 9; AA sequence." evidence="6" ref="5 9">
    <original>E</original>
    <variation>Q</variation>
    <location>
        <position position="646"/>
    </location>
</feature>
<feature type="sequence conflict" description="In Ref. 5; AA sequence and 9; AA sequence." evidence="6" ref="5 9">
    <original>E</original>
    <variation>Q</variation>
    <location>
        <position position="657"/>
    </location>
</feature>
<feature type="sequence conflict" description="In Ref. 5; AA sequence and 9; AA sequence." evidence="6" ref="5 9">
    <original>E</original>
    <variation>EQ</variation>
    <location>
        <position position="662"/>
    </location>
</feature>
<feature type="strand" evidence="7">
    <location>
        <begin position="10"/>
        <end position="16"/>
    </location>
</feature>
<feature type="strand" evidence="7">
    <location>
        <begin position="18"/>
        <end position="20"/>
    </location>
</feature>
<feature type="turn" evidence="7">
    <location>
        <begin position="21"/>
        <end position="24"/>
    </location>
</feature>
<feature type="helix" evidence="7">
    <location>
        <begin position="25"/>
        <end position="34"/>
    </location>
</feature>
<feature type="helix" evidence="7">
    <location>
        <begin position="54"/>
        <end position="58"/>
    </location>
</feature>
<feature type="strand" evidence="7">
    <location>
        <begin position="66"/>
        <end position="72"/>
    </location>
</feature>
<feature type="strand" evidence="7">
    <location>
        <begin position="82"/>
        <end position="88"/>
    </location>
</feature>
<feature type="strand" evidence="7">
    <location>
        <begin position="92"/>
        <end position="95"/>
    </location>
</feature>
<feature type="helix" evidence="7">
    <location>
        <begin position="97"/>
        <end position="104"/>
    </location>
</feature>
<feature type="strand" evidence="7">
    <location>
        <begin position="107"/>
        <end position="117"/>
    </location>
</feature>
<feature type="helix" evidence="7">
    <location>
        <begin position="121"/>
        <end position="132"/>
    </location>
</feature>
<feature type="strand" evidence="7">
    <location>
        <begin position="138"/>
        <end position="142"/>
    </location>
</feature>
<feature type="helix" evidence="7">
    <location>
        <begin position="151"/>
        <end position="160"/>
    </location>
</feature>
<feature type="strand" evidence="7">
    <location>
        <begin position="166"/>
        <end position="175"/>
    </location>
</feature>
<feature type="strand" evidence="7">
    <location>
        <begin position="178"/>
        <end position="184"/>
    </location>
</feature>
<feature type="turn" evidence="7">
    <location>
        <begin position="185"/>
        <end position="188"/>
    </location>
</feature>
<feature type="strand" evidence="7">
    <location>
        <begin position="195"/>
        <end position="199"/>
    </location>
</feature>
<feature type="turn" evidence="7">
    <location>
        <begin position="209"/>
        <end position="211"/>
    </location>
</feature>
<feature type="helix" evidence="7">
    <location>
        <begin position="212"/>
        <end position="215"/>
    </location>
</feature>
<feature type="helix" evidence="7">
    <location>
        <begin position="220"/>
        <end position="227"/>
    </location>
</feature>
<feature type="helix" evidence="7">
    <location>
        <begin position="231"/>
        <end position="238"/>
    </location>
</feature>
<feature type="helix" evidence="7">
    <location>
        <begin position="245"/>
        <end position="256"/>
    </location>
</feature>
<feature type="turn" evidence="7">
    <location>
        <begin position="257"/>
        <end position="259"/>
    </location>
</feature>
<feature type="strand" evidence="7">
    <location>
        <begin position="262"/>
        <end position="264"/>
    </location>
</feature>
<feature type="turn" evidence="7">
    <location>
        <begin position="269"/>
        <end position="272"/>
    </location>
</feature>
<feature type="helix" evidence="7">
    <location>
        <begin position="275"/>
        <end position="285"/>
    </location>
</feature>
<feature type="strand" evidence="7">
    <location>
        <begin position="289"/>
        <end position="292"/>
    </location>
</feature>
<feature type="strand" evidence="7">
    <location>
        <begin position="300"/>
        <end position="302"/>
    </location>
</feature>
<feature type="strand" evidence="7">
    <location>
        <begin position="318"/>
        <end position="327"/>
    </location>
</feature>
<feature type="turn" evidence="7">
    <location>
        <begin position="328"/>
        <end position="330"/>
    </location>
</feature>
<feature type="strand" evidence="7">
    <location>
        <begin position="331"/>
        <end position="344"/>
    </location>
</feature>
<feature type="strand" evidence="7">
    <location>
        <begin position="348"/>
        <end position="351"/>
    </location>
</feature>
<feature type="turn" evidence="7">
    <location>
        <begin position="352"/>
        <end position="355"/>
    </location>
</feature>
<feature type="strand" evidence="7">
    <location>
        <begin position="356"/>
        <end position="359"/>
    </location>
</feature>
<feature type="strand" evidence="7">
    <location>
        <begin position="363"/>
        <end position="366"/>
    </location>
</feature>
<feature type="strand" evidence="7">
    <location>
        <begin position="368"/>
        <end position="378"/>
    </location>
</feature>
<feature type="strand" evidence="7">
    <location>
        <begin position="382"/>
        <end position="386"/>
    </location>
</feature>
<feature type="strand" evidence="7">
    <location>
        <begin position="396"/>
        <end position="399"/>
    </location>
</feature>
<feature type="strand" evidence="7">
    <location>
        <begin position="400"/>
        <end position="402"/>
    </location>
</feature>
<feature type="strand" evidence="7">
    <location>
        <begin position="416"/>
        <end position="421"/>
    </location>
</feature>
<feature type="helix" evidence="7">
    <location>
        <begin position="425"/>
        <end position="427"/>
    </location>
</feature>
<feature type="helix" evidence="7">
    <location>
        <begin position="428"/>
        <end position="441"/>
    </location>
</feature>
<feature type="strand" evidence="7">
    <location>
        <begin position="446"/>
        <end position="449"/>
    </location>
</feature>
<feature type="strand" evidence="7">
    <location>
        <begin position="451"/>
        <end position="453"/>
    </location>
</feature>
<feature type="strand" evidence="7">
    <location>
        <begin position="456"/>
        <end position="462"/>
    </location>
</feature>
<feature type="helix" evidence="7">
    <location>
        <begin position="463"/>
        <end position="477"/>
    </location>
</feature>
<feature type="strand" evidence="7">
    <location>
        <begin position="482"/>
        <end position="484"/>
    </location>
</feature>
<feature type="strand" evidence="7">
    <location>
        <begin position="491"/>
        <end position="496"/>
    </location>
</feature>
<feature type="strand" evidence="7">
    <location>
        <begin position="498"/>
        <end position="504"/>
    </location>
</feature>
<feature type="strand" evidence="7">
    <location>
        <begin position="509"/>
        <end position="512"/>
    </location>
</feature>
<feature type="strand" evidence="7">
    <location>
        <begin position="517"/>
        <end position="524"/>
    </location>
</feature>
<feature type="turn" evidence="7">
    <location>
        <begin position="529"/>
        <end position="532"/>
    </location>
</feature>
<feature type="strand" evidence="7">
    <location>
        <begin position="533"/>
        <end position="537"/>
    </location>
</feature>
<feature type="strand" evidence="7">
    <location>
        <begin position="542"/>
        <end position="545"/>
    </location>
</feature>
<feature type="turn" evidence="7">
    <location>
        <begin position="547"/>
        <end position="549"/>
    </location>
</feature>
<feature type="helix" evidence="7">
    <location>
        <begin position="550"/>
        <end position="560"/>
    </location>
</feature>
<feature type="strand" evidence="7">
    <location>
        <begin position="562"/>
        <end position="564"/>
    </location>
</feature>
<feature type="turn" evidence="7">
    <location>
        <begin position="565"/>
        <end position="567"/>
    </location>
</feature>
<feature type="strand" evidence="7">
    <location>
        <begin position="573"/>
        <end position="582"/>
    </location>
</feature>
<feature type="strand" evidence="7">
    <location>
        <begin position="585"/>
        <end position="587"/>
    </location>
</feature>
<feature type="helix" evidence="7">
    <location>
        <begin position="590"/>
        <end position="604"/>
    </location>
</feature>
<feature type="helix" evidence="7">
    <location>
        <begin position="606"/>
        <end position="608"/>
    </location>
</feature>
<feature type="strand" evidence="7">
    <location>
        <begin position="610"/>
        <end position="623"/>
    </location>
</feature>
<feature type="helix" evidence="7">
    <location>
        <begin position="625"/>
        <end position="627"/>
    </location>
</feature>
<feature type="helix" evidence="7">
    <location>
        <begin position="628"/>
        <end position="637"/>
    </location>
</feature>
<feature type="strand" evidence="7">
    <location>
        <begin position="641"/>
        <end position="644"/>
    </location>
</feature>
<feature type="strand" evidence="7">
    <location>
        <begin position="651"/>
        <end position="660"/>
    </location>
</feature>
<feature type="helix" evidence="7">
    <location>
        <begin position="666"/>
        <end position="673"/>
    </location>
</feature>
<feature type="turn" evidence="7">
    <location>
        <begin position="674"/>
        <end position="676"/>
    </location>
</feature>
<feature type="strand" evidence="7">
    <location>
        <begin position="680"/>
        <end position="689"/>
    </location>
</feature>
<feature type="helix" evidence="7">
    <location>
        <begin position="692"/>
        <end position="697"/>
    </location>
</feature>
<reference key="1">
    <citation type="journal article" date="1984" name="Nucleic Acids Res.">
        <title>The nucleotide sequence of the Escherichia coli fus gene, coding for elongation factor G.</title>
        <authorList>
            <person name="Zengel J.M."/>
            <person name="Archer R.H."/>
            <person name="Lindahl L."/>
        </authorList>
    </citation>
    <scope>NUCLEOTIDE SEQUENCE [GENOMIC DNA]</scope>
</reference>
<reference key="2">
    <citation type="journal article" date="1992" name="Gene">
        <title>Comparison of the complete sequence of the str operon in Salmonella typhimurium and Escherichia coli.</title>
        <authorList>
            <person name="Johanson U."/>
            <person name="Hughes D."/>
        </authorList>
    </citation>
    <scope>NUCLEOTIDE SEQUENCE [GENOMIC DNA]</scope>
</reference>
<reference key="3">
    <citation type="journal article" date="1997" name="Science">
        <title>The complete genome sequence of Escherichia coli K-12.</title>
        <authorList>
            <person name="Blattner F.R."/>
            <person name="Plunkett G. III"/>
            <person name="Bloch C.A."/>
            <person name="Perna N.T."/>
            <person name="Burland V."/>
            <person name="Riley M."/>
            <person name="Collado-Vides J."/>
            <person name="Glasner J.D."/>
            <person name="Rode C.K."/>
            <person name="Mayhew G.F."/>
            <person name="Gregor J."/>
            <person name="Davis N.W."/>
            <person name="Kirkpatrick H.A."/>
            <person name="Goeden M.A."/>
            <person name="Rose D.J."/>
            <person name="Mau B."/>
            <person name="Shao Y."/>
        </authorList>
    </citation>
    <scope>NUCLEOTIDE SEQUENCE [LARGE SCALE GENOMIC DNA]</scope>
    <source>
        <strain>K12 / MG1655 / ATCC 47076</strain>
    </source>
</reference>
<reference key="4">
    <citation type="journal article" date="2006" name="Mol. Syst. Biol.">
        <title>Highly accurate genome sequences of Escherichia coli K-12 strains MG1655 and W3110.</title>
        <authorList>
            <person name="Hayashi K."/>
            <person name="Morooka N."/>
            <person name="Yamamoto Y."/>
            <person name="Fujita K."/>
            <person name="Isono K."/>
            <person name="Choi S."/>
            <person name="Ohtsubo E."/>
            <person name="Baba T."/>
            <person name="Wanner B.L."/>
            <person name="Mori H."/>
            <person name="Horiuchi T."/>
        </authorList>
    </citation>
    <scope>NUCLEOTIDE SEQUENCE [LARGE SCALE GENOMIC DNA]</scope>
    <source>
        <strain>K12 / W3110 / ATCC 27325 / DSM 5911</strain>
    </source>
</reference>
<reference key="5">
    <citation type="journal article" date="1982" name="FEBS Lett.">
        <title>The primary structure of elongation factor G from Escherichia coli. A complete amino acid sequence.</title>
        <authorList>
            <person name="Ovchinnikov Y.A."/>
            <person name="Alakhov Y.B."/>
            <person name="Bundulis Y.P."/>
            <person name="Bundule M.A."/>
            <person name="Dovgas N.V."/>
            <person name="Kozlov V.P."/>
            <person name="Motuz L.P."/>
            <person name="Vinokurov L.M."/>
        </authorList>
    </citation>
    <scope>PROTEIN SEQUENCE OF 2-704</scope>
</reference>
<reference key="6">
    <citation type="journal article" date="1980" name="J. Biol. Chem.">
        <title>DNA sequences from the str operon of Escherichia coli.</title>
        <authorList>
            <person name="Post L.E."/>
            <person name="Nomura M."/>
        </authorList>
    </citation>
    <scope>NUCLEOTIDE SEQUENCE [GENOMIC DNA] OF 1-94</scope>
    <source>
        <strain>K12</strain>
    </source>
</reference>
<reference key="7">
    <citation type="submission" date="1992-05" db="EMBL/GenBank/DDBJ databases">
        <authorList>
            <person name="Weigel C.T.O."/>
        </authorList>
    </citation>
    <scope>NUCLEOTIDE SEQUENCE [GENOMIC DNA] OF 1-21</scope>
    <source>
        <strain>L44</strain>
    </source>
</reference>
<reference key="8">
    <citation type="journal article" date="1997" name="Electrophoresis">
        <title>Comparing the predicted and observed properties of proteins encoded in the genome of Escherichia coli K-12.</title>
        <authorList>
            <person name="Link A.J."/>
            <person name="Robison K."/>
            <person name="Church G.M."/>
        </authorList>
    </citation>
    <scope>PROTEIN SEQUENCE OF 2-13</scope>
    <source>
        <strain>K12 / EMG2</strain>
    </source>
</reference>
<reference key="9">
    <citation type="journal article" date="1981" name="FEBS Lett.">
        <title>The primary structure of the elongation factor G from Escherichia coli: amino acid sequence of the C-terminal domain.</title>
        <authorList>
            <person name="Alakhov Y.B."/>
            <person name="Dovgas N.V."/>
            <person name="Motuz L.P."/>
            <person name="Vinokurov L.M."/>
            <person name="Ovchinnikov Y.A."/>
        </authorList>
    </citation>
    <scope>PROTEIN SEQUENCE OF 476-702</scope>
</reference>
<reference key="10">
    <citation type="journal article" date="1980" name="Gene">
        <title>The nucleotide sequence of the cloned tufA gene of Escherichia coli.</title>
        <authorList>
            <person name="Yokota T."/>
            <person name="Sugisaki H."/>
            <person name="Takanami M."/>
            <person name="Kaziro Y."/>
        </authorList>
    </citation>
    <scope>NUCLEOTIDE SEQUENCE [GENOMIC DNA] OF 684-704</scope>
</reference>
<reference key="11">
    <citation type="journal article" date="1997" name="Electrophoresis">
        <title>Escherichia coli proteome analysis using the gene-protein database.</title>
        <authorList>
            <person name="VanBogelen R.A."/>
            <person name="Abshire K.Z."/>
            <person name="Moldover B."/>
            <person name="Olson E.R."/>
            <person name="Neidhardt F.C."/>
        </authorList>
    </citation>
    <scope>IDENTIFICATION BY 2D-GEL</scope>
</reference>
<reference key="12">
    <citation type="journal article" date="1997" name="Nature">
        <title>Hydrolysis of GTP by elongation factor G drives tRNA movement on the ribosome.</title>
        <authorList>
            <person name="Rodnina M.V."/>
            <person name="Savelsbergh A."/>
            <person name="Katunin V.I."/>
            <person name="Wintermeyer W."/>
        </authorList>
    </citation>
    <scope>FUNCTION</scope>
    <scope>CATALYTIC ACTIVITY</scope>
</reference>
<reference key="13">
    <citation type="journal article" date="2009" name="Mol. Cell. Proteomics">
        <title>Lysine acetylation is a highly abundant and evolutionarily conserved modification in Escherichia coli.</title>
        <authorList>
            <person name="Zhang J."/>
            <person name="Sprung R."/>
            <person name="Pei J."/>
            <person name="Tan X."/>
            <person name="Kim S."/>
            <person name="Zhu H."/>
            <person name="Liu C.F."/>
            <person name="Grishin N.V."/>
            <person name="Zhao Y."/>
        </authorList>
    </citation>
    <scope>ACETYLATION [LARGE SCALE ANALYSIS] AT LYS-504 AND LYS-643</scope>
    <scope>IDENTIFICATION BY MASS SPECTROMETRY</scope>
    <source>
        <strain>K12 / JW1106</strain>
        <strain>K12 / MG1655 / ATCC 47076</strain>
    </source>
</reference>
<reference key="14">
    <citation type="journal article" date="2003" name="Cell">
        <title>Locking and unlocking of ribosomal motions.</title>
        <authorList>
            <person name="Valle M."/>
            <person name="Zavialov A."/>
            <person name="Sengupta J."/>
            <person name="Rawat U."/>
            <person name="Ehrenberg M."/>
            <person name="Frank J."/>
        </authorList>
    </citation>
    <scope>3D-STRUCTURE MODELING OF RIBOSOMAL COMPLEXES WITH EF-G</scope>
</reference>
<name>EFG_ECOLI</name>
<organism>
    <name type="scientific">Escherichia coli (strain K12)</name>
    <dbReference type="NCBI Taxonomy" id="83333"/>
    <lineage>
        <taxon>Bacteria</taxon>
        <taxon>Pseudomonadati</taxon>
        <taxon>Pseudomonadota</taxon>
        <taxon>Gammaproteobacteria</taxon>
        <taxon>Enterobacterales</taxon>
        <taxon>Enterobacteriaceae</taxon>
        <taxon>Escherichia</taxon>
    </lineage>
</organism>
<protein>
    <recommendedName>
        <fullName>Elongation factor G</fullName>
        <shortName>EF-G</shortName>
        <ecNumber evidence="4">3.6.5.-</ecNumber>
    </recommendedName>
</protein>
<keyword id="KW-0002">3D-structure</keyword>
<keyword id="KW-0007">Acetylation</keyword>
<keyword id="KW-0963">Cytoplasm</keyword>
<keyword id="KW-0903">Direct protein sequencing</keyword>
<keyword id="KW-0251">Elongation factor</keyword>
<keyword id="KW-0342">GTP-binding</keyword>
<keyword id="KW-0378">Hydrolase</keyword>
<keyword id="KW-0547">Nucleotide-binding</keyword>
<keyword id="KW-0648">Protein biosynthesis</keyword>
<keyword id="KW-1185">Reference proteome</keyword>
<comment type="function">
    <text evidence="4">Catalyzes the GTP-dependent ribosomal translocation step during translation elongation (PubMed:8985244). During this step, the ribosome changes from the pre-translocational (PRE) to the post-translocational (POST) state as the newly formed A-site-bound peptidyl-tRNA and P-site-bound deacylated tRNA move to the P and E sites, respectively (PubMed:8985244). Catalyzes the coordinated movement of the two tRNA molecules, the mRNA and conformational changes in the ribosome (PubMed:8985244).</text>
</comment>
<comment type="catalytic activity">
    <reaction evidence="4">
        <text>GTP + H2O = GDP + phosphate + H(+)</text>
        <dbReference type="Rhea" id="RHEA:19669"/>
        <dbReference type="ChEBI" id="CHEBI:15377"/>
        <dbReference type="ChEBI" id="CHEBI:15378"/>
        <dbReference type="ChEBI" id="CHEBI:37565"/>
        <dbReference type="ChEBI" id="CHEBI:43474"/>
        <dbReference type="ChEBI" id="CHEBI:58189"/>
    </reaction>
    <physiologicalReaction direction="left-to-right" evidence="4">
        <dbReference type="Rhea" id="RHEA:19670"/>
    </physiologicalReaction>
</comment>
<comment type="subcellular location">
    <subcellularLocation>
        <location>Cytoplasm</location>
    </subcellularLocation>
</comment>
<comment type="similarity">
    <text evidence="6">Belongs to the TRAFAC class translation factor GTPase superfamily. Classic translation factor GTPase family. EF-G/EF-2 subfamily.</text>
</comment>
<sequence>MARTTPIARYRNIGISAHIDAGKTTTTERILFYTGVNHKIGEVHDGAATMDWMEQEQERGITITSAATTAFWSGMAKQYEPHRINIIDTPGHVDFTIEVERSMRVLDGAVMVYCAVGGVQPQSETVWRQANKYKVPRIAFVNKMDRMGANFLKVVNQIKTRLGANPVPLQLAIGAEEHFTGVVDLVKMKAINWNDADQGVTFEYEDIPADMVELANEWHQNLIESAAEASEELMEKYLGGEELTEAEIKGALRQRVLNNEIILVTCGSAFKNKGVQAMLDAVIDYLPSPVDVPAINGILDDGKDTPAERHASDDEPFSALAFKIATDPFVGNLTFFRVYSGVVNSGDTVLNSVKAARERFGRIVQMHANKREEIKEVRAGDIAAAIGLKDVTTGDTLCDPDAPIILERMEFPEPVISIAVEPKTKADQEKMGLALGRLAKEDPSFRVWTDEESNQTIIAGMGELHLDIIVDRMKREFNVEANVGKPQVAYRETIRQKVTDVEGKHAKQSGGRGQYGHVVIDMYPLEPGSNPKGYEFINDIKGGVIPGEYIPAVDKGIQEQLKAGPLAGYPVVDMGIRLHFGSYHDVDSSELAFKLAASIAFKEGFKKAKPVLLEPIMKVEVETPEENTGDVIGDLSRRRGMLKGQESEVTGVKIHAEVPLSEMFGYATQLRSLTKGRASYTMEFLKYDEAPSNVAQAVIEARGK</sequence>
<evidence type="ECO:0000250" key="1"/>
<evidence type="ECO:0000269" key="2">
    <source>
    </source>
</evidence>
<evidence type="ECO:0000269" key="3">
    <source>
    </source>
</evidence>
<evidence type="ECO:0000269" key="4">
    <source>
    </source>
</evidence>
<evidence type="ECO:0000269" key="5">
    <source>
    </source>
</evidence>
<evidence type="ECO:0000305" key="6"/>
<evidence type="ECO:0007829" key="7">
    <source>
        <dbReference type="PDB" id="4V9O"/>
    </source>
</evidence>
<proteinExistence type="evidence at protein level"/>
<dbReference type="EC" id="3.6.5.-" evidence="4"/>
<dbReference type="EMBL" id="X00415">
    <property type="protein sequence ID" value="CAA25120.1"/>
    <property type="molecule type" value="Genomic_DNA"/>
</dbReference>
<dbReference type="EMBL" id="X64592">
    <property type="status" value="NOT_ANNOTATED_CDS"/>
    <property type="molecule type" value="Genomic_DNA"/>
</dbReference>
<dbReference type="EMBL" id="U18997">
    <property type="protein sequence ID" value="AAA58137.1"/>
    <property type="molecule type" value="Genomic_DNA"/>
</dbReference>
<dbReference type="EMBL" id="U00096">
    <property type="protein sequence ID" value="AAC76365.1"/>
    <property type="molecule type" value="Genomic_DNA"/>
</dbReference>
<dbReference type="EMBL" id="AP009048">
    <property type="protein sequence ID" value="BAE77951.1"/>
    <property type="molecule type" value="Genomic_DNA"/>
</dbReference>
<dbReference type="EMBL" id="AH002539">
    <property type="protein sequence ID" value="AAA50991.1"/>
    <property type="molecule type" value="Genomic_DNA"/>
</dbReference>
<dbReference type="EMBL" id="X65735">
    <property type="protein sequence ID" value="CAA46645.1"/>
    <property type="molecule type" value="Genomic_DNA"/>
</dbReference>
<dbReference type="PIR" id="G65127">
    <property type="entry name" value="EFECG"/>
</dbReference>
<dbReference type="RefSeq" id="NP_417799.1">
    <property type="nucleotide sequence ID" value="NC_000913.3"/>
</dbReference>
<dbReference type="RefSeq" id="WP_000124700.1">
    <property type="nucleotide sequence ID" value="NZ_STEB01000004.1"/>
</dbReference>
<dbReference type="PDB" id="2RDO">
    <property type="method" value="EM"/>
    <property type="resolution" value="9.10 A"/>
    <property type="chains" value="7=1-704"/>
</dbReference>
<dbReference type="PDB" id="3J0E">
    <property type="method" value="EM"/>
    <property type="resolution" value="9.90 A"/>
    <property type="chains" value="H=2-703"/>
</dbReference>
<dbReference type="PDB" id="3J9Z">
    <property type="method" value="EM"/>
    <property type="resolution" value="3.60 A"/>
    <property type="chains" value="S1=2-703"/>
</dbReference>
<dbReference type="PDB" id="3JA1">
    <property type="method" value="EM"/>
    <property type="resolution" value="3.60 A"/>
    <property type="chains" value="S3=2-703"/>
</dbReference>
<dbReference type="PDB" id="4V7B">
    <property type="method" value="EM"/>
    <property type="resolution" value="6.80 A"/>
    <property type="chains" value="AY=1-704"/>
</dbReference>
<dbReference type="PDB" id="4V7D">
    <property type="method" value="EM"/>
    <property type="resolution" value="7.60 A"/>
    <property type="chains" value="BZ=2-704"/>
</dbReference>
<dbReference type="PDB" id="4V9O">
    <property type="method" value="X-ray"/>
    <property type="resolution" value="2.90 A"/>
    <property type="chains" value="BV/DV/FV/HV=1-704"/>
</dbReference>
<dbReference type="PDB" id="4V9P">
    <property type="method" value="X-ray"/>
    <property type="resolution" value="2.90 A"/>
    <property type="chains" value="BV/DV/FV/HV=1-704"/>
</dbReference>
<dbReference type="PDB" id="7N2C">
    <property type="method" value="EM"/>
    <property type="resolution" value="2.72 A"/>
    <property type="chains" value="EF=2-704"/>
</dbReference>
<dbReference type="PDB" id="7PJV">
    <property type="method" value="EM"/>
    <property type="resolution" value="3.10 A"/>
    <property type="chains" value="x=1-704"/>
</dbReference>
<dbReference type="PDB" id="7PJY">
    <property type="method" value="EM"/>
    <property type="resolution" value="3.10 A"/>
    <property type="chains" value="x=1-704"/>
</dbReference>
<dbReference type="PDB" id="7UG7">
    <property type="method" value="EM"/>
    <property type="resolution" value="2.58 A"/>
    <property type="chains" value="EF=1-700"/>
</dbReference>
<dbReference type="PDBsum" id="2RDO"/>
<dbReference type="PDBsum" id="3J0E"/>
<dbReference type="PDBsum" id="3J9Z"/>
<dbReference type="PDBsum" id="3JA1"/>
<dbReference type="PDBsum" id="4V7B"/>
<dbReference type="PDBsum" id="4V7D"/>
<dbReference type="PDBsum" id="4V9O"/>
<dbReference type="PDBsum" id="4V9P"/>
<dbReference type="PDBsum" id="7N2C"/>
<dbReference type="PDBsum" id="7PJV"/>
<dbReference type="PDBsum" id="7PJY"/>
<dbReference type="PDBsum" id="7UG7"/>
<dbReference type="EMDB" id="EMD-13461"/>
<dbReference type="EMDB" id="EMD-13464"/>
<dbReference type="EMDB" id="EMD-1430"/>
<dbReference type="EMDB" id="EMD-1917"/>
<dbReference type="EMDB" id="EMD-1918"/>
<dbReference type="EMDB" id="EMD-24132"/>
<dbReference type="EMDB" id="EMD-25421"/>
<dbReference type="EMDB" id="EMD-26486"/>
<dbReference type="EMDB" id="EMD-5775"/>
<dbReference type="EMDB" id="EMD-5797"/>
<dbReference type="EMDB" id="EMD-5798"/>
<dbReference type="EMDB" id="EMD-5800"/>
<dbReference type="EMDB" id="EMD-6315"/>
<dbReference type="EMDB" id="EMD-6316"/>
<dbReference type="SMR" id="P0A6M8"/>
<dbReference type="BioGRID" id="4259389">
    <property type="interactions" value="164"/>
</dbReference>
<dbReference type="BioGRID" id="852158">
    <property type="interactions" value="2"/>
</dbReference>
<dbReference type="DIP" id="DIP-31836N"/>
<dbReference type="FunCoup" id="P0A6M8">
    <property type="interactions" value="996"/>
</dbReference>
<dbReference type="IntAct" id="P0A6M8">
    <property type="interactions" value="76"/>
</dbReference>
<dbReference type="STRING" id="511145.b3340"/>
<dbReference type="CarbonylDB" id="P0A6M8"/>
<dbReference type="iPTMnet" id="P0A6M8"/>
<dbReference type="jPOST" id="P0A6M8"/>
<dbReference type="PaxDb" id="511145-b3340"/>
<dbReference type="EnsemblBacteria" id="AAC76365">
    <property type="protein sequence ID" value="AAC76365"/>
    <property type="gene ID" value="b3340"/>
</dbReference>
<dbReference type="GeneID" id="93778658"/>
<dbReference type="GeneID" id="947847"/>
<dbReference type="KEGG" id="ecj:JW3302"/>
<dbReference type="KEGG" id="eco:b3340"/>
<dbReference type="KEGG" id="ecoc:C3026_18140"/>
<dbReference type="PATRIC" id="fig|1411691.4.peg.3391"/>
<dbReference type="EchoBASE" id="EB0355"/>
<dbReference type="eggNOG" id="COG0480">
    <property type="taxonomic scope" value="Bacteria"/>
</dbReference>
<dbReference type="HOGENOM" id="CLU_002794_4_1_6"/>
<dbReference type="InParanoid" id="P0A6M8"/>
<dbReference type="OMA" id="GQFAKVQ"/>
<dbReference type="OrthoDB" id="9804431at2"/>
<dbReference type="PhylomeDB" id="P0A6M8"/>
<dbReference type="BioCyc" id="EcoCyc:EG10360-MONOMER"/>
<dbReference type="BRENDA" id="3.6.5.3">
    <property type="organism ID" value="2026"/>
</dbReference>
<dbReference type="EvolutionaryTrace" id="P0A6M8"/>
<dbReference type="PRO" id="PR:P0A6M8"/>
<dbReference type="Proteomes" id="UP000000625">
    <property type="component" value="Chromosome"/>
</dbReference>
<dbReference type="GO" id="GO:0005737">
    <property type="term" value="C:cytoplasm"/>
    <property type="evidence" value="ECO:0007005"/>
    <property type="project" value="UniProtKB"/>
</dbReference>
<dbReference type="GO" id="GO:0005829">
    <property type="term" value="C:cytosol"/>
    <property type="evidence" value="ECO:0000314"/>
    <property type="project" value="EcoCyc"/>
</dbReference>
<dbReference type="GO" id="GO:0005525">
    <property type="term" value="F:GTP binding"/>
    <property type="evidence" value="ECO:0007669"/>
    <property type="project" value="UniProtKB-UniRule"/>
</dbReference>
<dbReference type="GO" id="GO:0003924">
    <property type="term" value="F:GTPase activity"/>
    <property type="evidence" value="ECO:0000314"/>
    <property type="project" value="UniProtKB"/>
</dbReference>
<dbReference type="GO" id="GO:0097216">
    <property type="term" value="F:guanosine tetraphosphate binding"/>
    <property type="evidence" value="ECO:0000314"/>
    <property type="project" value="EcoCyc"/>
</dbReference>
<dbReference type="GO" id="GO:0003746">
    <property type="term" value="F:translation elongation factor activity"/>
    <property type="evidence" value="ECO:0000314"/>
    <property type="project" value="UniProtKB"/>
</dbReference>
<dbReference type="GO" id="GO:0032790">
    <property type="term" value="P:ribosome disassembly"/>
    <property type="evidence" value="ECO:0000318"/>
    <property type="project" value="GO_Central"/>
</dbReference>
<dbReference type="GO" id="GO:0006414">
    <property type="term" value="P:translational elongation"/>
    <property type="evidence" value="ECO:0000314"/>
    <property type="project" value="UniProtKB"/>
</dbReference>
<dbReference type="CDD" id="cd01886">
    <property type="entry name" value="EF-G"/>
    <property type="match status" value="1"/>
</dbReference>
<dbReference type="CDD" id="cd16262">
    <property type="entry name" value="EFG_III"/>
    <property type="match status" value="1"/>
</dbReference>
<dbReference type="CDD" id="cd01434">
    <property type="entry name" value="EFG_mtEFG1_IV"/>
    <property type="match status" value="1"/>
</dbReference>
<dbReference type="CDD" id="cd03713">
    <property type="entry name" value="EFG_mtEFG_C"/>
    <property type="match status" value="1"/>
</dbReference>
<dbReference type="CDD" id="cd04088">
    <property type="entry name" value="EFG_mtEFG_II"/>
    <property type="match status" value="1"/>
</dbReference>
<dbReference type="FunFam" id="2.40.30.10:FF:000006">
    <property type="entry name" value="Elongation factor G"/>
    <property type="match status" value="1"/>
</dbReference>
<dbReference type="FunFam" id="3.30.230.10:FF:000003">
    <property type="entry name" value="Elongation factor G"/>
    <property type="match status" value="1"/>
</dbReference>
<dbReference type="FunFam" id="3.30.70.240:FF:000001">
    <property type="entry name" value="Elongation factor G"/>
    <property type="match status" value="1"/>
</dbReference>
<dbReference type="FunFam" id="3.30.70.870:FF:000001">
    <property type="entry name" value="Elongation factor G"/>
    <property type="match status" value="1"/>
</dbReference>
<dbReference type="FunFam" id="3.40.50.300:FF:000029">
    <property type="entry name" value="Elongation factor G"/>
    <property type="match status" value="1"/>
</dbReference>
<dbReference type="Gene3D" id="3.30.230.10">
    <property type="match status" value="1"/>
</dbReference>
<dbReference type="Gene3D" id="3.30.70.240">
    <property type="match status" value="1"/>
</dbReference>
<dbReference type="Gene3D" id="3.30.70.870">
    <property type="entry name" value="Elongation Factor G (Translational Gtpase), domain 3"/>
    <property type="match status" value="1"/>
</dbReference>
<dbReference type="Gene3D" id="3.40.50.300">
    <property type="entry name" value="P-loop containing nucleotide triphosphate hydrolases"/>
    <property type="match status" value="1"/>
</dbReference>
<dbReference type="Gene3D" id="2.40.30.10">
    <property type="entry name" value="Translation factors"/>
    <property type="match status" value="1"/>
</dbReference>
<dbReference type="HAMAP" id="MF_00054_B">
    <property type="entry name" value="EF_G_EF_2_B"/>
    <property type="match status" value="1"/>
</dbReference>
<dbReference type="InterPro" id="IPR041095">
    <property type="entry name" value="EFG_II"/>
</dbReference>
<dbReference type="InterPro" id="IPR009022">
    <property type="entry name" value="EFG_III"/>
</dbReference>
<dbReference type="InterPro" id="IPR035647">
    <property type="entry name" value="EFG_III/V"/>
</dbReference>
<dbReference type="InterPro" id="IPR047872">
    <property type="entry name" value="EFG_IV"/>
</dbReference>
<dbReference type="InterPro" id="IPR035649">
    <property type="entry name" value="EFG_V"/>
</dbReference>
<dbReference type="InterPro" id="IPR000640">
    <property type="entry name" value="EFG_V-like"/>
</dbReference>
<dbReference type="InterPro" id="IPR004161">
    <property type="entry name" value="EFTu-like_2"/>
</dbReference>
<dbReference type="InterPro" id="IPR031157">
    <property type="entry name" value="G_TR_CS"/>
</dbReference>
<dbReference type="InterPro" id="IPR027417">
    <property type="entry name" value="P-loop_NTPase"/>
</dbReference>
<dbReference type="InterPro" id="IPR020568">
    <property type="entry name" value="Ribosomal_Su5_D2-typ_SF"/>
</dbReference>
<dbReference type="InterPro" id="IPR014721">
    <property type="entry name" value="Ribsml_uS5_D2-typ_fold_subgr"/>
</dbReference>
<dbReference type="InterPro" id="IPR005225">
    <property type="entry name" value="Small_GTP-bd"/>
</dbReference>
<dbReference type="InterPro" id="IPR000795">
    <property type="entry name" value="T_Tr_GTP-bd_dom"/>
</dbReference>
<dbReference type="InterPro" id="IPR009000">
    <property type="entry name" value="Transl_B-barrel_sf"/>
</dbReference>
<dbReference type="InterPro" id="IPR004540">
    <property type="entry name" value="Transl_elong_EFG/EF2"/>
</dbReference>
<dbReference type="InterPro" id="IPR005517">
    <property type="entry name" value="Transl_elong_EFG/EF2_IV"/>
</dbReference>
<dbReference type="NCBIfam" id="TIGR00484">
    <property type="entry name" value="EF-G"/>
    <property type="match status" value="1"/>
</dbReference>
<dbReference type="NCBIfam" id="NF009381">
    <property type="entry name" value="PRK12740.1-5"/>
    <property type="match status" value="1"/>
</dbReference>
<dbReference type="NCBIfam" id="TIGR00231">
    <property type="entry name" value="small_GTP"/>
    <property type="match status" value="1"/>
</dbReference>
<dbReference type="PANTHER" id="PTHR43261:SF1">
    <property type="entry name" value="RIBOSOME-RELEASING FACTOR 2, MITOCHONDRIAL"/>
    <property type="match status" value="1"/>
</dbReference>
<dbReference type="PANTHER" id="PTHR43261">
    <property type="entry name" value="TRANSLATION ELONGATION FACTOR G-RELATED"/>
    <property type="match status" value="1"/>
</dbReference>
<dbReference type="Pfam" id="PF00679">
    <property type="entry name" value="EFG_C"/>
    <property type="match status" value="1"/>
</dbReference>
<dbReference type="Pfam" id="PF14492">
    <property type="entry name" value="EFG_III"/>
    <property type="match status" value="1"/>
</dbReference>
<dbReference type="Pfam" id="PF03764">
    <property type="entry name" value="EFG_IV"/>
    <property type="match status" value="1"/>
</dbReference>
<dbReference type="Pfam" id="PF00009">
    <property type="entry name" value="GTP_EFTU"/>
    <property type="match status" value="1"/>
</dbReference>
<dbReference type="Pfam" id="PF03144">
    <property type="entry name" value="GTP_EFTU_D2"/>
    <property type="match status" value="1"/>
</dbReference>
<dbReference type="PRINTS" id="PR00315">
    <property type="entry name" value="ELONGATNFCT"/>
</dbReference>
<dbReference type="SMART" id="SM00838">
    <property type="entry name" value="EFG_C"/>
    <property type="match status" value="1"/>
</dbReference>
<dbReference type="SMART" id="SM00889">
    <property type="entry name" value="EFG_IV"/>
    <property type="match status" value="1"/>
</dbReference>
<dbReference type="SUPFAM" id="SSF54980">
    <property type="entry name" value="EF-G C-terminal domain-like"/>
    <property type="match status" value="2"/>
</dbReference>
<dbReference type="SUPFAM" id="SSF52540">
    <property type="entry name" value="P-loop containing nucleoside triphosphate hydrolases"/>
    <property type="match status" value="1"/>
</dbReference>
<dbReference type="SUPFAM" id="SSF54211">
    <property type="entry name" value="Ribosomal protein S5 domain 2-like"/>
    <property type="match status" value="1"/>
</dbReference>
<dbReference type="SUPFAM" id="SSF50447">
    <property type="entry name" value="Translation proteins"/>
    <property type="match status" value="1"/>
</dbReference>
<dbReference type="PROSITE" id="PS00301">
    <property type="entry name" value="G_TR_1"/>
    <property type="match status" value="1"/>
</dbReference>
<dbReference type="PROSITE" id="PS51722">
    <property type="entry name" value="G_TR_2"/>
    <property type="match status" value="1"/>
</dbReference>
<gene>
    <name type="primary">fusA</name>
    <name type="synonym">far</name>
    <name type="synonym">fus</name>
    <name type="ordered locus">b3340</name>
    <name type="ordered locus">JW3302</name>
</gene>